<feature type="transit peptide" description="Mitochondrion">
    <location>
        <begin position="1"/>
        <end position="23"/>
    </location>
</feature>
<feature type="chain" id="PRO_0000138626" description="Mitochondrial peptide methionine sulfoxide reductase">
    <location>
        <begin position="24"/>
        <end position="235"/>
    </location>
</feature>
<feature type="active site" description="Cysteine sulfenic acid (-SOH) intermediate" evidence="1">
    <location>
        <position position="74"/>
    </location>
</feature>
<feature type="modified residue" description="N6-acetyllysine; alternate" evidence="2">
    <location>
        <position position="106"/>
    </location>
</feature>
<feature type="modified residue" description="N6-succinyllysine; alternate" evidence="2">
    <location>
        <position position="106"/>
    </location>
</feature>
<feature type="disulfide bond" description="Redox-active; alternate" evidence="1">
    <location>
        <begin position="74"/>
        <end position="220"/>
    </location>
</feature>
<feature type="disulfide bond" description="Redox-active; alternate" evidence="1">
    <location>
        <begin position="220"/>
        <end position="229"/>
    </location>
</feature>
<feature type="splice variant" id="VSP_041405" description="In isoform 2." evidence="6 8">
    <location>
        <begin position="1"/>
        <end position="66"/>
    </location>
</feature>
<feature type="splice variant" id="VSP_041406" description="In isoform 3." evidence="7 8">
    <original>MLSATRRACQLLLLHSLFPVPRMGNSASNIVSPQEALPGRKEQTPVAA</original>
    <variation>MCSEP</variation>
    <location>
        <begin position="1"/>
        <end position="48"/>
    </location>
</feature>
<feature type="splice variant" id="VSP_042132" description="In isoform 5." evidence="9">
    <location>
        <begin position="1"/>
        <end position="22"/>
    </location>
</feature>
<feature type="splice variant" id="VSP_041407" description="In isoform 4." evidence="9">
    <location>
        <begin position="71"/>
        <end position="110"/>
    </location>
</feature>
<feature type="mutagenesis site" description="Impaired subcellular location." evidence="3">
    <original>R</original>
    <variation>A</variation>
    <location>
        <position position="6"/>
    </location>
</feature>
<feature type="mutagenesis site" description="Impaired subcellular location." evidence="3">
    <original>R</original>
    <variation>A</variation>
    <location>
        <position position="7"/>
    </location>
</feature>
<feature type="mutagenesis site" description="Impaired subcellular location.">
    <location>
        <begin position="11"/>
        <end position="13"/>
    </location>
</feature>
<feature type="mutagenesis site" description="Impaired subcellular location." evidence="3">
    <original>R</original>
    <variation>A</variation>
    <location>
        <position position="22"/>
    </location>
</feature>
<feature type="sequence conflict" description="In Ref. 6; AAG09689." evidence="9" ref="6">
    <location>
        <begin position="12"/>
        <end position="14"/>
    </location>
</feature>
<feature type="sequence conflict" description="In Ref. 6; AAG09689." evidence="9" ref="6">
    <original>LKVF</original>
    <variation>SRL</variation>
    <location>
        <begin position="134"/>
        <end position="137"/>
    </location>
</feature>
<feature type="lipid moiety-binding region" description="N-myristoyl glycine" evidence="4 5">
    <location sequence="Q9UJ68-5">
        <position position="2"/>
    </location>
</feature>
<evidence type="ECO:0000250" key="1">
    <source>
        <dbReference type="UniProtKB" id="P0A744"/>
    </source>
</evidence>
<evidence type="ECO:0000250" key="2">
    <source>
        <dbReference type="UniProtKB" id="Q9D6Y7"/>
    </source>
</evidence>
<evidence type="ECO:0000269" key="3">
    <source>
    </source>
</evidence>
<evidence type="ECO:0000269" key="4">
    <source>
    </source>
</evidence>
<evidence type="ECO:0000269" key="5">
    <source>
    </source>
</evidence>
<evidence type="ECO:0000303" key="6">
    <source>
    </source>
</evidence>
<evidence type="ECO:0000303" key="7">
    <source>
    </source>
</evidence>
<evidence type="ECO:0000303" key="8">
    <source>
    </source>
</evidence>
<evidence type="ECO:0000305" key="9"/>
<keyword id="KW-0007">Acetylation</keyword>
<keyword id="KW-0024">Alternative initiation</keyword>
<keyword id="KW-0877">Alternative promoter usage</keyword>
<keyword id="KW-0025">Alternative splicing</keyword>
<keyword id="KW-0963">Cytoplasm</keyword>
<keyword id="KW-1015">Disulfide bond</keyword>
<keyword id="KW-0449">Lipoprotein</keyword>
<keyword id="KW-0472">Membrane</keyword>
<keyword id="KW-0496">Mitochondrion</keyword>
<keyword id="KW-0519">Myristate</keyword>
<keyword id="KW-0539">Nucleus</keyword>
<keyword id="KW-0560">Oxidoreductase</keyword>
<keyword id="KW-1267">Proteomics identification</keyword>
<keyword id="KW-0676">Redox-active center</keyword>
<keyword id="KW-1185">Reference proteome</keyword>
<keyword id="KW-0809">Transit peptide</keyword>
<reference key="1">
    <citation type="journal article" date="1999" name="FEBS Lett.">
        <title>Molecular cloning and functional expression of a human peptide methionine sulfoxide reductase (hMsrA).</title>
        <authorList>
            <person name="Kuschel L."/>
            <person name="Hansel A."/>
            <person name="Schoenherr R."/>
            <person name="Weissbach H."/>
            <person name="Brot N."/>
            <person name="Hoshi T."/>
            <person name="Heinemann S.H."/>
        </authorList>
    </citation>
    <scope>NUCLEOTIDE SEQUENCE [MRNA] (ISOFORM 1)</scope>
    <source>
        <tissue>Lung</tissue>
    </source>
</reference>
<reference key="2">
    <citation type="journal article" date="2005" name="Biochim. Biophys. Acta">
        <title>Heterogeneity and function of mammalian MSRs: enzymes for repair, protection and regulation.</title>
        <authorList>
            <person name="Hansel A."/>
            <person name="Heinemann S.H."/>
            <person name="Hoshi T."/>
        </authorList>
    </citation>
    <scope>NUCLEOTIDE SEQUENCE [MRNA] (ISOFORM 3)</scope>
    <scope>ALTERNATIVE SPLICING</scope>
    <scope>SUBCELLULAR LOCATION</scope>
</reference>
<reference key="3">
    <citation type="journal article" date="2006" name="Exp. Eye Res.">
        <title>Gene structure, localization and role in oxidative stress of methionine sulfoxide reductase A (MSRA) in the monkey retina.</title>
        <authorList>
            <person name="Lee J.W."/>
            <person name="Gordiyenko N.V."/>
            <person name="Marchetti M."/>
            <person name="Tserentsoodol N."/>
            <person name="Sagher D."/>
            <person name="Alam S."/>
            <person name="Weissbach H."/>
            <person name="Kantorow M."/>
            <person name="Rodriguez I.R."/>
        </authorList>
    </citation>
    <scope>NUCLEOTIDE SEQUENCE [MRNA] (ISOFORMS 1; 2 AND 3)</scope>
    <scope>NUCLEOTIDE SEQUENCE [GENOMIC DNA] (ISOFORMS 1; 2 AND 3)</scope>
    <scope>ALTERNATIVE PROMOTER USAGE</scope>
    <scope>SUBCELLULAR LOCATION</scope>
</reference>
<reference key="4">
    <citation type="journal article" date="2004" name="Nat. Genet.">
        <title>Complete sequencing and characterization of 21,243 full-length human cDNAs.</title>
        <authorList>
            <person name="Ota T."/>
            <person name="Suzuki Y."/>
            <person name="Nishikawa T."/>
            <person name="Otsuki T."/>
            <person name="Sugiyama T."/>
            <person name="Irie R."/>
            <person name="Wakamatsu A."/>
            <person name="Hayashi K."/>
            <person name="Sato H."/>
            <person name="Nagai K."/>
            <person name="Kimura K."/>
            <person name="Makita H."/>
            <person name="Sekine M."/>
            <person name="Obayashi M."/>
            <person name="Nishi T."/>
            <person name="Shibahara T."/>
            <person name="Tanaka T."/>
            <person name="Ishii S."/>
            <person name="Yamamoto J."/>
            <person name="Saito K."/>
            <person name="Kawai Y."/>
            <person name="Isono Y."/>
            <person name="Nakamura Y."/>
            <person name="Nagahari K."/>
            <person name="Murakami K."/>
            <person name="Yasuda T."/>
            <person name="Iwayanagi T."/>
            <person name="Wagatsuma M."/>
            <person name="Shiratori A."/>
            <person name="Sudo H."/>
            <person name="Hosoiri T."/>
            <person name="Kaku Y."/>
            <person name="Kodaira H."/>
            <person name="Kondo H."/>
            <person name="Sugawara M."/>
            <person name="Takahashi M."/>
            <person name="Kanda K."/>
            <person name="Yokoi T."/>
            <person name="Furuya T."/>
            <person name="Kikkawa E."/>
            <person name="Omura Y."/>
            <person name="Abe K."/>
            <person name="Kamihara K."/>
            <person name="Katsuta N."/>
            <person name="Sato K."/>
            <person name="Tanikawa M."/>
            <person name="Yamazaki M."/>
            <person name="Ninomiya K."/>
            <person name="Ishibashi T."/>
            <person name="Yamashita H."/>
            <person name="Murakawa K."/>
            <person name="Fujimori K."/>
            <person name="Tanai H."/>
            <person name="Kimata M."/>
            <person name="Watanabe M."/>
            <person name="Hiraoka S."/>
            <person name="Chiba Y."/>
            <person name="Ishida S."/>
            <person name="Ono Y."/>
            <person name="Takiguchi S."/>
            <person name="Watanabe S."/>
            <person name="Yosida M."/>
            <person name="Hotuta T."/>
            <person name="Kusano J."/>
            <person name="Kanehori K."/>
            <person name="Takahashi-Fujii A."/>
            <person name="Hara H."/>
            <person name="Tanase T.-O."/>
            <person name="Nomura Y."/>
            <person name="Togiya S."/>
            <person name="Komai F."/>
            <person name="Hara R."/>
            <person name="Takeuchi K."/>
            <person name="Arita M."/>
            <person name="Imose N."/>
            <person name="Musashino K."/>
            <person name="Yuuki H."/>
            <person name="Oshima A."/>
            <person name="Sasaki N."/>
            <person name="Aotsuka S."/>
            <person name="Yoshikawa Y."/>
            <person name="Matsunawa H."/>
            <person name="Ichihara T."/>
            <person name="Shiohata N."/>
            <person name="Sano S."/>
            <person name="Moriya S."/>
            <person name="Momiyama H."/>
            <person name="Satoh N."/>
            <person name="Takami S."/>
            <person name="Terashima Y."/>
            <person name="Suzuki O."/>
            <person name="Nakagawa S."/>
            <person name="Senoh A."/>
            <person name="Mizoguchi H."/>
            <person name="Goto Y."/>
            <person name="Shimizu F."/>
            <person name="Wakebe H."/>
            <person name="Hishigaki H."/>
            <person name="Watanabe T."/>
            <person name="Sugiyama A."/>
            <person name="Takemoto M."/>
            <person name="Kawakami B."/>
            <person name="Yamazaki M."/>
            <person name="Watanabe K."/>
            <person name="Kumagai A."/>
            <person name="Itakura S."/>
            <person name="Fukuzumi Y."/>
            <person name="Fujimori Y."/>
            <person name="Komiyama M."/>
            <person name="Tashiro H."/>
            <person name="Tanigami A."/>
            <person name="Fujiwara T."/>
            <person name="Ono T."/>
            <person name="Yamada K."/>
            <person name="Fujii Y."/>
            <person name="Ozaki K."/>
            <person name="Hirao M."/>
            <person name="Ohmori Y."/>
            <person name="Kawabata A."/>
            <person name="Hikiji T."/>
            <person name="Kobatake N."/>
            <person name="Inagaki H."/>
            <person name="Ikema Y."/>
            <person name="Okamoto S."/>
            <person name="Okitani R."/>
            <person name="Kawakami T."/>
            <person name="Noguchi S."/>
            <person name="Itoh T."/>
            <person name="Shigeta K."/>
            <person name="Senba T."/>
            <person name="Matsumura K."/>
            <person name="Nakajima Y."/>
            <person name="Mizuno T."/>
            <person name="Morinaga M."/>
            <person name="Sasaki M."/>
            <person name="Togashi T."/>
            <person name="Oyama M."/>
            <person name="Hata H."/>
            <person name="Watanabe M."/>
            <person name="Komatsu T."/>
            <person name="Mizushima-Sugano J."/>
            <person name="Satoh T."/>
            <person name="Shirai Y."/>
            <person name="Takahashi Y."/>
            <person name="Nakagawa K."/>
            <person name="Okumura K."/>
            <person name="Nagase T."/>
            <person name="Nomura N."/>
            <person name="Kikuchi H."/>
            <person name="Masuho Y."/>
            <person name="Yamashita R."/>
            <person name="Nakai K."/>
            <person name="Yada T."/>
            <person name="Nakamura Y."/>
            <person name="Ohara O."/>
            <person name="Isogai T."/>
            <person name="Sugano S."/>
        </authorList>
    </citation>
    <scope>NUCLEOTIDE SEQUENCE [LARGE SCALE MRNA] (ISOFORM 2)</scope>
    <source>
        <tissue>Cerebellum</tissue>
    </source>
</reference>
<reference key="5">
    <citation type="submission" date="1998-08" db="EMBL/GenBank/DDBJ databases">
        <title>Cloning of a novel human cDNA which shows great homology to Bos taurus methionine sulfoxide reductase (msrA) mRNA.</title>
        <authorList>
            <person name="Zhao Y."/>
            <person name="Yu L."/>
            <person name="Tu Q."/>
            <person name="Yue P."/>
            <person name="Zhang M."/>
            <person name="Zhao S.Y."/>
        </authorList>
    </citation>
    <scope>NUCLEOTIDE SEQUENCE [MRNA] (ISOFORM 1)</scope>
    <scope>NUCLEOTIDE SEQUENCE [GENOMIC DNA] (ISOFORM 1)</scope>
</reference>
<reference key="6">
    <citation type="submission" date="1999-09" db="EMBL/GenBank/DDBJ databases">
        <title>A novel gene expressed in human hypothalamus.</title>
        <authorList>
            <person name="Peng Y."/>
            <person name="Huang C."/>
            <person name="Gu Y."/>
            <person name="Xu S."/>
            <person name="Han Z."/>
            <person name="Fu G."/>
            <person name="Chen Z."/>
        </authorList>
    </citation>
    <scope>NUCLEOTIDE SEQUENCE [LARGE SCALE MRNA] (ISOFORM 1)</scope>
    <source>
        <tissue>Hypothalamus</tissue>
    </source>
</reference>
<reference key="7">
    <citation type="journal article" date="2006" name="Nature">
        <title>DNA sequence and analysis of human chromosome 8.</title>
        <authorList>
            <person name="Nusbaum C."/>
            <person name="Mikkelsen T.S."/>
            <person name="Zody M.C."/>
            <person name="Asakawa S."/>
            <person name="Taudien S."/>
            <person name="Garber M."/>
            <person name="Kodira C.D."/>
            <person name="Schueler M.G."/>
            <person name="Shimizu A."/>
            <person name="Whittaker C.A."/>
            <person name="Chang J.L."/>
            <person name="Cuomo C.A."/>
            <person name="Dewar K."/>
            <person name="FitzGerald M.G."/>
            <person name="Yang X."/>
            <person name="Allen N.R."/>
            <person name="Anderson S."/>
            <person name="Asakawa T."/>
            <person name="Blechschmidt K."/>
            <person name="Bloom T."/>
            <person name="Borowsky M.L."/>
            <person name="Butler J."/>
            <person name="Cook A."/>
            <person name="Corum B."/>
            <person name="DeArellano K."/>
            <person name="DeCaprio D."/>
            <person name="Dooley K.T."/>
            <person name="Dorris L. III"/>
            <person name="Engels R."/>
            <person name="Gloeckner G."/>
            <person name="Hafez N."/>
            <person name="Hagopian D.S."/>
            <person name="Hall J.L."/>
            <person name="Ishikawa S.K."/>
            <person name="Jaffe D.B."/>
            <person name="Kamat A."/>
            <person name="Kudoh J."/>
            <person name="Lehmann R."/>
            <person name="Lokitsang T."/>
            <person name="Macdonald P."/>
            <person name="Major J.E."/>
            <person name="Matthews C.D."/>
            <person name="Mauceli E."/>
            <person name="Menzel U."/>
            <person name="Mihalev A.H."/>
            <person name="Minoshima S."/>
            <person name="Murayama Y."/>
            <person name="Naylor J.W."/>
            <person name="Nicol R."/>
            <person name="Nguyen C."/>
            <person name="O'Leary S.B."/>
            <person name="O'Neill K."/>
            <person name="Parker S.C.J."/>
            <person name="Polley A."/>
            <person name="Raymond C.K."/>
            <person name="Reichwald K."/>
            <person name="Rodriguez J."/>
            <person name="Sasaki T."/>
            <person name="Schilhabel M."/>
            <person name="Siddiqui R."/>
            <person name="Smith C.L."/>
            <person name="Sneddon T.P."/>
            <person name="Talamas J.A."/>
            <person name="Tenzin P."/>
            <person name="Topham K."/>
            <person name="Venkataraman V."/>
            <person name="Wen G."/>
            <person name="Yamazaki S."/>
            <person name="Young S.K."/>
            <person name="Zeng Q."/>
            <person name="Zimmer A.R."/>
            <person name="Rosenthal A."/>
            <person name="Birren B.W."/>
            <person name="Platzer M."/>
            <person name="Shimizu N."/>
            <person name="Lander E.S."/>
        </authorList>
    </citation>
    <scope>NUCLEOTIDE SEQUENCE [LARGE SCALE GENOMIC DNA]</scope>
</reference>
<reference key="8">
    <citation type="submission" date="2005-07" db="EMBL/GenBank/DDBJ databases">
        <authorList>
            <person name="Mural R.J."/>
            <person name="Istrail S."/>
            <person name="Sutton G.G."/>
            <person name="Florea L."/>
            <person name="Halpern A.L."/>
            <person name="Mobarry C.M."/>
            <person name="Lippert R."/>
            <person name="Walenz B."/>
            <person name="Shatkay H."/>
            <person name="Dew I."/>
            <person name="Miller J.R."/>
            <person name="Flanigan M.J."/>
            <person name="Edwards N.J."/>
            <person name="Bolanos R."/>
            <person name="Fasulo D."/>
            <person name="Halldorsson B.V."/>
            <person name="Hannenhalli S."/>
            <person name="Turner R."/>
            <person name="Yooseph S."/>
            <person name="Lu F."/>
            <person name="Nusskern D.R."/>
            <person name="Shue B.C."/>
            <person name="Zheng X.H."/>
            <person name="Zhong F."/>
            <person name="Delcher A.L."/>
            <person name="Huson D.H."/>
            <person name="Kravitz S.A."/>
            <person name="Mouchard L."/>
            <person name="Reinert K."/>
            <person name="Remington K.A."/>
            <person name="Clark A.G."/>
            <person name="Waterman M.S."/>
            <person name="Eichler E.E."/>
            <person name="Adams M.D."/>
            <person name="Hunkapiller M.W."/>
            <person name="Myers E.W."/>
            <person name="Venter J.C."/>
        </authorList>
    </citation>
    <scope>NUCLEOTIDE SEQUENCE [LARGE SCALE GENOMIC DNA]</scope>
</reference>
<reference key="9">
    <citation type="journal article" date="2004" name="Genome Res.">
        <title>The status, quality, and expansion of the NIH full-length cDNA project: the Mammalian Gene Collection (MGC).</title>
        <authorList>
            <consortium name="The MGC Project Team"/>
        </authorList>
    </citation>
    <scope>NUCLEOTIDE SEQUENCE [LARGE SCALE MRNA] (ISOFORM 1)</scope>
    <source>
        <tissue>Uterus</tissue>
    </source>
</reference>
<reference key="10">
    <citation type="journal article" date="2002" name="FASEB J.">
        <title>Mitochondrial targeting of the human peptide methionine sulfoxide reductase (MSRA), an enzyme involved in the repair of oxidized proteins.</title>
        <authorList>
            <person name="Hansel A."/>
            <person name="Kuschel L."/>
            <person name="Hehl S."/>
            <person name="Lemke C."/>
            <person name="Agricola H.J."/>
            <person name="Hoshi T."/>
            <person name="Heinemann S.H."/>
        </authorList>
    </citation>
    <scope>SUBCELLULAR LOCATION</scope>
    <scope>MUTAGENESIS OF ARG-6; ARG-7; ARG-22 AND 11-LEU--LEU-14</scope>
</reference>
<reference key="11">
    <citation type="journal article" date="2010" name="J. Biol. Chem.">
        <title>Dual sites of protein initiation control the localization and myristoylation of methionine sulfoxide reductase A.</title>
        <authorList>
            <person name="Kim G."/>
            <person name="Cole N.B."/>
            <person name="Lim J.C."/>
            <person name="Zhao H."/>
            <person name="Levine R.L."/>
        </authorList>
    </citation>
    <scope>MYRISTOYLATION AT GLY-2 (ISOFORM 5)</scope>
    <scope>ALTERNATIVE INITIATION</scope>
</reference>
<reference key="12">
    <citation type="journal article" date="2014" name="J. Proteomics">
        <title>An enzyme assisted RP-RPLC approach for in-depth analysis of human liver phosphoproteome.</title>
        <authorList>
            <person name="Bian Y."/>
            <person name="Song C."/>
            <person name="Cheng K."/>
            <person name="Dong M."/>
            <person name="Wang F."/>
            <person name="Huang J."/>
            <person name="Sun D."/>
            <person name="Wang L."/>
            <person name="Ye M."/>
            <person name="Zou H."/>
        </authorList>
    </citation>
    <scope>IDENTIFICATION BY MASS SPECTROMETRY [LARGE SCALE ANALYSIS]</scope>
    <source>
        <tissue>Liver</tissue>
    </source>
</reference>
<reference key="13">
    <citation type="journal article" date="2015" name="Angew. Chem. Int. Ed.">
        <title>Multifunctional reagents for quantitative proteome-wide analysis of protein modification in human cells and dynamic profiling of protein lipidation during vertebrate development.</title>
        <authorList>
            <person name="Broncel M."/>
            <person name="Serwa R.A."/>
            <person name="Ciepla P."/>
            <person name="Krause E."/>
            <person name="Dallman M.J."/>
            <person name="Magee A.I."/>
            <person name="Tate E.W."/>
        </authorList>
    </citation>
    <scope>MYRISTOYLATION AT GLY-2 (ISOFORM 5)</scope>
    <scope>CLEAVAGE OF INITIATOR METHIONINE (ISOFORM 5)</scope>
    <scope>IDENTIFICATION BY MASS SPECTROMETRY</scope>
</reference>
<sequence length="235" mass="26132">MLSATRRACQLLLLHSLFPVPRMGNSASNIVSPQEALPGRKEQTPVAAKHHVNGNRTVEPFPEGTQMAVFGMGCFWGAERKFWVLKGVYSTQVGFAGGYTSNPTYKEVCSEKTGHAEVVRVVYQPEHMSFEELLKVFWENHDPTQGMRQGNDHGTQYRSAIYPTSAKQMEAALSSKENYQKVLSEHGFGPITTDIREGQTFYYAEDYHQQYLSKNPNGYCGLGGTGVSCPVGIKK</sequence>
<gene>
    <name type="primary">MSRA</name>
</gene>
<name>MSRA_HUMAN</name>
<proteinExistence type="evidence at protein level"/>
<accession>Q9UJ68</accession>
<accession>E9PAS8</accession>
<accession>Q52TC4</accession>
<accession>Q549N4</accession>
<accession>Q66MI7</accession>
<protein>
    <recommendedName>
        <fullName>Mitochondrial peptide methionine sulfoxide reductase</fullName>
        <ecNumber evidence="2">1.8.4.11</ecNumber>
    </recommendedName>
    <alternativeName>
        <fullName>Peptide-methionine (S)-S-oxide reductase</fullName>
        <shortName>Peptide Met(O) reductase</shortName>
    </alternativeName>
    <alternativeName>
        <fullName>Protein-methionine-S-oxide reductase</fullName>
        <shortName>PMSR</shortName>
    </alternativeName>
</protein>
<organism>
    <name type="scientific">Homo sapiens</name>
    <name type="common">Human</name>
    <dbReference type="NCBI Taxonomy" id="9606"/>
    <lineage>
        <taxon>Eukaryota</taxon>
        <taxon>Metazoa</taxon>
        <taxon>Chordata</taxon>
        <taxon>Craniata</taxon>
        <taxon>Vertebrata</taxon>
        <taxon>Euteleostomi</taxon>
        <taxon>Mammalia</taxon>
        <taxon>Eutheria</taxon>
        <taxon>Euarchontoglires</taxon>
        <taxon>Primates</taxon>
        <taxon>Haplorrhini</taxon>
        <taxon>Catarrhini</taxon>
        <taxon>Hominidae</taxon>
        <taxon>Homo</taxon>
    </lineage>
</organism>
<comment type="function">
    <text>Has an important function as a repair enzyme for proteins that have been inactivated by oxidation. Catalyzes the reversible oxidation-reduction of methionine sulfoxide in proteins to methionine.</text>
</comment>
<comment type="catalytic activity">
    <reaction evidence="2">
        <text>L-methionyl-[protein] + [thioredoxin]-disulfide + H2O = L-methionyl-(S)-S-oxide-[protein] + [thioredoxin]-dithiol</text>
        <dbReference type="Rhea" id="RHEA:14217"/>
        <dbReference type="Rhea" id="RHEA-COMP:10698"/>
        <dbReference type="Rhea" id="RHEA-COMP:10700"/>
        <dbReference type="Rhea" id="RHEA-COMP:12313"/>
        <dbReference type="Rhea" id="RHEA-COMP:12315"/>
        <dbReference type="ChEBI" id="CHEBI:15377"/>
        <dbReference type="ChEBI" id="CHEBI:16044"/>
        <dbReference type="ChEBI" id="CHEBI:29950"/>
        <dbReference type="ChEBI" id="CHEBI:44120"/>
        <dbReference type="ChEBI" id="CHEBI:50058"/>
        <dbReference type="EC" id="1.8.4.11"/>
    </reaction>
</comment>
<comment type="catalytic activity">
    <reaction evidence="2">
        <text>[thioredoxin]-disulfide + L-methionine + H2O = L-methionine (S)-S-oxide + [thioredoxin]-dithiol</text>
        <dbReference type="Rhea" id="RHEA:19993"/>
        <dbReference type="Rhea" id="RHEA-COMP:10698"/>
        <dbReference type="Rhea" id="RHEA-COMP:10700"/>
        <dbReference type="ChEBI" id="CHEBI:15377"/>
        <dbReference type="ChEBI" id="CHEBI:29950"/>
        <dbReference type="ChEBI" id="CHEBI:50058"/>
        <dbReference type="ChEBI" id="CHEBI:57844"/>
        <dbReference type="ChEBI" id="CHEBI:58772"/>
        <dbReference type="EC" id="1.8.4.11"/>
    </reaction>
</comment>
<comment type="interaction">
    <interactant intactId="EBI-19157918">
        <id>Q9UJ68</id>
    </interactant>
    <interactant intactId="EBI-11962928">
        <id>Q9UI47-2</id>
        <label>CTNNA3</label>
    </interactant>
    <organismsDiffer>false</organismsDiffer>
    <experiments>3</experiments>
</comment>
<comment type="interaction">
    <interactant intactId="EBI-19157918">
        <id>Q9UJ68</id>
    </interactant>
    <interactant intactId="EBI-18688654">
        <id>Q9BUY7</id>
        <label>EFCAB11</label>
    </interactant>
    <organismsDiffer>false</organismsDiffer>
    <experiments>3</experiments>
</comment>
<comment type="interaction">
    <interactant intactId="EBI-19157918">
        <id>Q9UJ68</id>
    </interactant>
    <interactant intactId="EBI-2557269">
        <id>Q9UKT7</id>
        <label>FBXL3</label>
    </interactant>
    <organismsDiffer>false</organismsDiffer>
    <experiments>3</experiments>
</comment>
<comment type="interaction">
    <interactant intactId="EBI-19157918">
        <id>Q9UJ68</id>
    </interactant>
    <interactant intactId="EBI-744820">
        <id>Q9UM19</id>
        <label>HPCAL4</label>
    </interactant>
    <organismsDiffer>false</organismsDiffer>
    <experiments>3</experiments>
</comment>
<comment type="interaction">
    <interactant intactId="EBI-19157918">
        <id>Q9UJ68</id>
    </interactant>
    <interactant intactId="EBI-10181968">
        <id>Q7Z4N8</id>
        <label>P4HA3</label>
    </interactant>
    <organismsDiffer>false</organismsDiffer>
    <experiments>3</experiments>
</comment>
<comment type="interaction">
    <interactant intactId="EBI-19157918">
        <id>Q9UJ68</id>
    </interactant>
    <interactant intactId="EBI-711619">
        <id>Q13228</id>
        <label>SELENBP1</label>
    </interactant>
    <organismsDiffer>false</organismsDiffer>
    <experiments>3</experiments>
</comment>
<comment type="interaction">
    <interactant intactId="EBI-19157918">
        <id>Q9UJ68</id>
    </interactant>
    <interactant intactId="EBI-1380492">
        <id>Q8TF42</id>
        <label>UBASH3B</label>
    </interactant>
    <organismsDiffer>false</organismsDiffer>
    <experiments>2</experiments>
</comment>
<comment type="subcellular location">
    <molecule>Isoform 1</molecule>
    <subcellularLocation>
        <location>Mitochondrion</location>
    </subcellularLocation>
</comment>
<comment type="subcellular location">
    <molecule>Isoform 2</molecule>
    <subcellularLocation>
        <location>Cytoplasm</location>
    </subcellularLocation>
</comment>
<comment type="subcellular location">
    <molecule>Isoform 3</molecule>
    <subcellularLocation>
        <location>Cytoplasm</location>
    </subcellularLocation>
    <subcellularLocation>
        <location>Nucleus</location>
    </subcellularLocation>
</comment>
<comment type="subcellular location">
    <molecule>Isoform 5</molecule>
    <subcellularLocation>
        <location>Cytoplasm</location>
    </subcellularLocation>
    <subcellularLocation>
        <location evidence="9">Membrane</location>
        <topology evidence="9">Lipid-anchor</topology>
    </subcellularLocation>
</comment>
<comment type="alternative products">
    <event type="alternative promoter"/>
    <event type="alternative splicing"/>
    <event type="alternative initiation"/>
    <isoform>
        <id>Q9UJ68-1</id>
        <name>1</name>
        <name>MsrA1</name>
        <name>mitoMSRA</name>
        <name>a</name>
        <sequence type="displayed"/>
    </isoform>
    <isoform>
        <id>Q9UJ68-2</id>
        <name>2</name>
        <name>MsrA2</name>
        <name>d</name>
        <sequence type="described" ref="VSP_041405"/>
    </isoform>
    <isoform>
        <id>Q9UJ68-3</id>
        <name>3</name>
        <name>MsrA3</name>
        <name>cytoMSRA</name>
        <name>c</name>
        <sequence type="described" ref="VSP_041406"/>
    </isoform>
    <isoform>
        <id>Q9UJ68-4</id>
        <name>4</name>
        <name>b</name>
        <sequence type="described" ref="VSP_041407"/>
    </isoform>
    <isoform>
        <id>Q9UJ68-5</id>
        <name>5</name>
        <sequence type="described" ref="VSP_042132"/>
    </isoform>
    <text>Only about 25% of mRNAs are initiated at the mitochondrial isoform 1 codon.</text>
</comment>
<comment type="tissue specificity">
    <text>Ubiquitous. Highest expression in adult kidney and cerebellum, followed by liver, heart ventricles, bone marrow and hippocampus.</text>
</comment>
<comment type="miscellaneous">
    <molecule>Isoform 1</molecule>
    <text>Mitochondrial. Produced by alternative splicing.</text>
</comment>
<comment type="miscellaneous">
    <molecule>Isoform 2</molecule>
    <text evidence="9">Cytoplasmic. Produced by alternative promoter usage.</text>
</comment>
<comment type="miscellaneous">
    <molecule>Isoform 3</molecule>
    <text evidence="9">Cytoplasmic and nuclear. Produced by alternative promoter usage.</text>
</comment>
<comment type="miscellaneous">
    <molecule>Isoform 4</molecule>
    <text evidence="9">Produced by alternative splicing.</text>
</comment>
<comment type="miscellaneous">
    <molecule>Isoform 5</molecule>
    <text evidence="9">Cytoplasmic. Produced by alternative initiation.</text>
</comment>
<comment type="similarity">
    <text evidence="9">Belongs to the MsrA Met sulfoxide reductase family.</text>
</comment>
<dbReference type="EC" id="1.8.4.11" evidence="2"/>
<dbReference type="EMBL" id="AJ242973">
    <property type="protein sequence ID" value="CAB59628.1"/>
    <property type="molecule type" value="mRNA"/>
</dbReference>
<dbReference type="EMBL" id="AY690665">
    <property type="protein sequence ID" value="AAU11088.1"/>
    <property type="molecule type" value="mRNA"/>
</dbReference>
<dbReference type="EMBL" id="AY958429">
    <property type="protein sequence ID" value="AAY17426.1"/>
    <property type="molecule type" value="mRNA"/>
</dbReference>
<dbReference type="EMBL" id="AY958430">
    <property type="protein sequence ID" value="AAY17427.1"/>
    <property type="molecule type" value="mRNA"/>
</dbReference>
<dbReference type="EMBL" id="AY958431">
    <property type="protein sequence ID" value="AAY17428.1"/>
    <property type="molecule type" value="mRNA"/>
</dbReference>
<dbReference type="EMBL" id="AY958432">
    <property type="protein sequence ID" value="AAY17429.1"/>
    <property type="molecule type" value="Genomic_DNA"/>
</dbReference>
<dbReference type="EMBL" id="AY958432">
    <property type="protein sequence ID" value="AAY17430.1"/>
    <property type="molecule type" value="Genomic_DNA"/>
</dbReference>
<dbReference type="EMBL" id="AY958432">
    <property type="protein sequence ID" value="AAY17431.1"/>
    <property type="molecule type" value="Genomic_DNA"/>
</dbReference>
<dbReference type="EMBL" id="AK293488">
    <property type="protein sequence ID" value="BAH11521.1"/>
    <property type="molecule type" value="mRNA"/>
</dbReference>
<dbReference type="EMBL" id="AF086925">
    <property type="protein sequence ID" value="AAP97154.1"/>
    <property type="molecule type" value="mRNA"/>
</dbReference>
<dbReference type="EMBL" id="AF183420">
    <property type="protein sequence ID" value="AAG09689.1"/>
    <property type="molecule type" value="mRNA"/>
</dbReference>
<dbReference type="EMBL" id="AC023385">
    <property type="status" value="NOT_ANNOTATED_CDS"/>
    <property type="molecule type" value="Genomic_DNA"/>
</dbReference>
<dbReference type="EMBL" id="AC034111">
    <property type="status" value="NOT_ANNOTATED_CDS"/>
    <property type="molecule type" value="Genomic_DNA"/>
</dbReference>
<dbReference type="EMBL" id="AC079200">
    <property type="status" value="NOT_ANNOTATED_CDS"/>
    <property type="molecule type" value="Genomic_DNA"/>
</dbReference>
<dbReference type="EMBL" id="AC112673">
    <property type="status" value="NOT_ANNOTATED_CDS"/>
    <property type="molecule type" value="Genomic_DNA"/>
</dbReference>
<dbReference type="EMBL" id="CH471157">
    <property type="protein sequence ID" value="EAW65584.1"/>
    <property type="molecule type" value="Genomic_DNA"/>
</dbReference>
<dbReference type="EMBL" id="CH471157">
    <property type="protein sequence ID" value="EAW65585.1"/>
    <property type="molecule type" value="Genomic_DNA"/>
</dbReference>
<dbReference type="EMBL" id="BC054033">
    <property type="protein sequence ID" value="AAH54033.1"/>
    <property type="molecule type" value="mRNA"/>
</dbReference>
<dbReference type="CCDS" id="CCDS47798.1">
    <molecule id="Q9UJ68-4"/>
</dbReference>
<dbReference type="CCDS" id="CCDS47799.1">
    <molecule id="Q9UJ68-3"/>
</dbReference>
<dbReference type="CCDS" id="CCDS56522.1">
    <molecule id="Q9UJ68-2"/>
</dbReference>
<dbReference type="CCDS" id="CCDS5975.1">
    <molecule id="Q9UJ68-1"/>
</dbReference>
<dbReference type="RefSeq" id="NP_001129142.1">
    <molecule id="Q9UJ68-4"/>
    <property type="nucleotide sequence ID" value="NM_001135670.3"/>
</dbReference>
<dbReference type="RefSeq" id="NP_001129143.1">
    <molecule id="Q9UJ68-3"/>
    <property type="nucleotide sequence ID" value="NM_001135671.3"/>
</dbReference>
<dbReference type="RefSeq" id="NP_001186658.1">
    <molecule id="Q9UJ68-2"/>
    <property type="nucleotide sequence ID" value="NM_001199729.3"/>
</dbReference>
<dbReference type="RefSeq" id="NP_036463.1">
    <molecule id="Q9UJ68-1"/>
    <property type="nucleotide sequence ID" value="NM_012331.5"/>
</dbReference>
<dbReference type="RefSeq" id="XP_016868938.1">
    <property type="nucleotide sequence ID" value="XM_017013449.1"/>
</dbReference>
<dbReference type="RefSeq" id="XP_016868939.1">
    <molecule id="Q9UJ68-2"/>
    <property type="nucleotide sequence ID" value="XM_017013450.3"/>
</dbReference>
<dbReference type="RefSeq" id="XP_054188222.1">
    <molecule id="Q9UJ68-2"/>
    <property type="nucleotide sequence ID" value="XM_054332247.1"/>
</dbReference>
<dbReference type="RefSeq" id="XP_054216475.1">
    <molecule id="Q9UJ68-2"/>
    <property type="nucleotide sequence ID" value="XM_054360500.1"/>
</dbReference>
<dbReference type="SMR" id="Q9UJ68"/>
<dbReference type="BioGRID" id="110588">
    <property type="interactions" value="36"/>
</dbReference>
<dbReference type="FunCoup" id="Q9UJ68">
    <property type="interactions" value="1182"/>
</dbReference>
<dbReference type="IntAct" id="Q9UJ68">
    <property type="interactions" value="14"/>
</dbReference>
<dbReference type="MINT" id="Q9UJ68"/>
<dbReference type="STRING" id="9606.ENSP00000313921"/>
<dbReference type="DrugBank" id="DB04447">
    <property type="generic name" value="1,4-Dithiothreitol"/>
</dbReference>
<dbReference type="DrugBank" id="DB00134">
    <property type="generic name" value="Methionine"/>
</dbReference>
<dbReference type="GlyGen" id="Q9UJ68">
    <property type="glycosylation" value="2 sites, 1 O-linked glycan (1 site)"/>
</dbReference>
<dbReference type="iPTMnet" id="Q9UJ68"/>
<dbReference type="PhosphoSitePlus" id="Q9UJ68"/>
<dbReference type="BioMuta" id="MSRA"/>
<dbReference type="DMDM" id="12230350"/>
<dbReference type="jPOST" id="Q9UJ68"/>
<dbReference type="MassIVE" id="Q9UJ68"/>
<dbReference type="PaxDb" id="9606-ENSP00000313921"/>
<dbReference type="PeptideAtlas" id="Q9UJ68"/>
<dbReference type="ProteomicsDB" id="84588">
    <molecule id="Q9UJ68-1"/>
</dbReference>
<dbReference type="ProteomicsDB" id="84589">
    <molecule id="Q9UJ68-2"/>
</dbReference>
<dbReference type="ProteomicsDB" id="84590">
    <molecule id="Q9UJ68-3"/>
</dbReference>
<dbReference type="ProteomicsDB" id="84591">
    <molecule id="Q9UJ68-4"/>
</dbReference>
<dbReference type="ProteomicsDB" id="84592">
    <molecule id="Q9UJ68-5"/>
</dbReference>
<dbReference type="Pumba" id="Q9UJ68"/>
<dbReference type="Antibodypedia" id="8418">
    <property type="antibodies" value="250 antibodies from 33 providers"/>
</dbReference>
<dbReference type="DNASU" id="4482"/>
<dbReference type="Ensembl" id="ENST00000317173.9">
    <molecule id="Q9UJ68-1"/>
    <property type="protein sequence ID" value="ENSP00000313921.4"/>
    <property type="gene ID" value="ENSG00000175806.15"/>
</dbReference>
<dbReference type="Ensembl" id="ENST00000382490.9">
    <molecule id="Q9UJ68-3"/>
    <property type="protein sequence ID" value="ENSP00000371930.5"/>
    <property type="gene ID" value="ENSG00000175806.15"/>
</dbReference>
<dbReference type="Ensembl" id="ENST00000441698.6">
    <molecule id="Q9UJ68-4"/>
    <property type="protein sequence ID" value="ENSP00000410912.2"/>
    <property type="gene ID" value="ENSG00000175806.15"/>
</dbReference>
<dbReference type="Ensembl" id="ENST00000528246.5">
    <molecule id="Q9UJ68-2"/>
    <property type="protein sequence ID" value="ENSP00000436839.1"/>
    <property type="gene ID" value="ENSG00000175806.15"/>
</dbReference>
<dbReference type="Ensembl" id="ENST00000643047.1">
    <molecule id="Q9UJ68-3"/>
    <property type="protein sequence ID" value="ENSP00000493922.1"/>
    <property type="gene ID" value="ENSG00000285250.2"/>
</dbReference>
<dbReference type="Ensembl" id="ENST00000643332.1">
    <molecule id="Q9UJ68-4"/>
    <property type="protein sequence ID" value="ENSP00000495223.1"/>
    <property type="gene ID" value="ENSG00000285250.2"/>
</dbReference>
<dbReference type="Ensembl" id="ENST00000645254.1">
    <molecule id="Q9UJ68-2"/>
    <property type="protein sequence ID" value="ENSP00000496174.1"/>
    <property type="gene ID" value="ENSG00000285250.2"/>
</dbReference>
<dbReference type="Ensembl" id="ENST00000645318.2">
    <molecule id="Q9UJ68-1"/>
    <property type="protein sequence ID" value="ENSP00000493848.1"/>
    <property type="gene ID" value="ENSG00000285250.2"/>
</dbReference>
<dbReference type="GeneID" id="4482"/>
<dbReference type="KEGG" id="hsa:4482"/>
<dbReference type="MANE-Select" id="ENST00000317173.9">
    <property type="protein sequence ID" value="ENSP00000313921.4"/>
    <property type="RefSeq nucleotide sequence ID" value="NM_012331.5"/>
    <property type="RefSeq protein sequence ID" value="NP_036463.1"/>
</dbReference>
<dbReference type="UCSC" id="uc003wsx.4">
    <molecule id="Q9UJ68-1"/>
    <property type="organism name" value="human"/>
</dbReference>
<dbReference type="AGR" id="HGNC:7377"/>
<dbReference type="CTD" id="4482"/>
<dbReference type="DisGeNET" id="4482"/>
<dbReference type="GeneCards" id="MSRA"/>
<dbReference type="HGNC" id="HGNC:7377">
    <property type="gene designation" value="MSRA"/>
</dbReference>
<dbReference type="HPA" id="ENSG00000175806">
    <property type="expression patterns" value="Tissue enhanced (kidney, liver)"/>
</dbReference>
<dbReference type="MIM" id="601250">
    <property type="type" value="gene"/>
</dbReference>
<dbReference type="neXtProt" id="NX_Q9UJ68"/>
<dbReference type="OpenTargets" id="ENSG00000175806"/>
<dbReference type="PharmGKB" id="PA31182"/>
<dbReference type="VEuPathDB" id="HostDB:ENSG00000175806"/>
<dbReference type="eggNOG" id="KOG1635">
    <property type="taxonomic scope" value="Eukaryota"/>
</dbReference>
<dbReference type="GeneTree" id="ENSGT00390000003823"/>
<dbReference type="HOGENOM" id="CLU_031040_10_3_1"/>
<dbReference type="InParanoid" id="Q9UJ68"/>
<dbReference type="OMA" id="LFWESHD"/>
<dbReference type="OrthoDB" id="77405at2759"/>
<dbReference type="PAN-GO" id="Q9UJ68">
    <property type="GO annotations" value="4 GO annotations based on evolutionary models"/>
</dbReference>
<dbReference type="PhylomeDB" id="Q9UJ68"/>
<dbReference type="TreeFam" id="TF353884"/>
<dbReference type="BRENDA" id="1.8.4.11">
    <property type="organism ID" value="2681"/>
</dbReference>
<dbReference type="PathwayCommons" id="Q9UJ68"/>
<dbReference type="Reactome" id="R-HSA-5676934">
    <property type="pathway name" value="Protein repair"/>
</dbReference>
<dbReference type="SignaLink" id="Q9UJ68"/>
<dbReference type="BioGRID-ORCS" id="4482">
    <property type="hits" value="11 hits in 1164 CRISPR screens"/>
</dbReference>
<dbReference type="ChiTaRS" id="MSRA">
    <property type="organism name" value="human"/>
</dbReference>
<dbReference type="GeneWiki" id="MSRA_(gene)"/>
<dbReference type="GenomeRNAi" id="4482"/>
<dbReference type="Pharos" id="Q9UJ68">
    <property type="development level" value="Tbio"/>
</dbReference>
<dbReference type="PRO" id="PR:Q9UJ68"/>
<dbReference type="Proteomes" id="UP000005640">
    <property type="component" value="Chromosome 8"/>
</dbReference>
<dbReference type="RNAct" id="Q9UJ68">
    <property type="molecule type" value="protein"/>
</dbReference>
<dbReference type="Bgee" id="ENSG00000175806">
    <property type="expression patterns" value="Expressed in cortical plate and 101 other cell types or tissues"/>
</dbReference>
<dbReference type="ExpressionAtlas" id="Q9UJ68">
    <property type="expression patterns" value="baseline and differential"/>
</dbReference>
<dbReference type="GO" id="GO:0005737">
    <property type="term" value="C:cytoplasm"/>
    <property type="evidence" value="ECO:0000318"/>
    <property type="project" value="GO_Central"/>
</dbReference>
<dbReference type="GO" id="GO:0005829">
    <property type="term" value="C:cytosol"/>
    <property type="evidence" value="ECO:0000314"/>
    <property type="project" value="HPA"/>
</dbReference>
<dbReference type="GO" id="GO:0070062">
    <property type="term" value="C:extracellular exosome"/>
    <property type="evidence" value="ECO:0007005"/>
    <property type="project" value="UniProtKB"/>
</dbReference>
<dbReference type="GO" id="GO:0016020">
    <property type="term" value="C:membrane"/>
    <property type="evidence" value="ECO:0007669"/>
    <property type="project" value="UniProtKB-SubCell"/>
</dbReference>
<dbReference type="GO" id="GO:0005739">
    <property type="term" value="C:mitochondrion"/>
    <property type="evidence" value="ECO:0006056"/>
    <property type="project" value="FlyBase"/>
</dbReference>
<dbReference type="GO" id="GO:0016604">
    <property type="term" value="C:nuclear body"/>
    <property type="evidence" value="ECO:0000314"/>
    <property type="project" value="HPA"/>
</dbReference>
<dbReference type="GO" id="GO:0005654">
    <property type="term" value="C:nucleoplasm"/>
    <property type="evidence" value="ECO:0000314"/>
    <property type="project" value="HPA"/>
</dbReference>
<dbReference type="GO" id="GO:0036456">
    <property type="term" value="F:L-methionine-(S)-S-oxide reductase activity"/>
    <property type="evidence" value="ECO:0000318"/>
    <property type="project" value="GO_Central"/>
</dbReference>
<dbReference type="GO" id="GO:0008113">
    <property type="term" value="F:peptide-methionine (S)-S-oxide reductase activity"/>
    <property type="evidence" value="ECO:0000318"/>
    <property type="project" value="GO_Central"/>
</dbReference>
<dbReference type="GO" id="GO:0034599">
    <property type="term" value="P:cellular response to oxidative stress"/>
    <property type="evidence" value="ECO:0000318"/>
    <property type="project" value="GO_Central"/>
</dbReference>
<dbReference type="GO" id="GO:0006555">
    <property type="term" value="P:methionine metabolic process"/>
    <property type="evidence" value="ECO:0000304"/>
    <property type="project" value="ProtInc"/>
</dbReference>
<dbReference type="GO" id="GO:0036211">
    <property type="term" value="P:protein modification process"/>
    <property type="evidence" value="ECO:0000304"/>
    <property type="project" value="ProtInc"/>
</dbReference>
<dbReference type="GO" id="GO:0030091">
    <property type="term" value="P:protein repair"/>
    <property type="evidence" value="ECO:0000304"/>
    <property type="project" value="Reactome"/>
</dbReference>
<dbReference type="GO" id="GO:0006979">
    <property type="term" value="P:response to oxidative stress"/>
    <property type="evidence" value="ECO:0000304"/>
    <property type="project" value="ProtInc"/>
</dbReference>
<dbReference type="FunFam" id="3.30.1060.10:FF:000001">
    <property type="entry name" value="Peptide methionine sulfoxide reductase MsrA"/>
    <property type="match status" value="1"/>
</dbReference>
<dbReference type="Gene3D" id="3.30.1060.10">
    <property type="entry name" value="Peptide methionine sulphoxide reductase MsrA"/>
    <property type="match status" value="1"/>
</dbReference>
<dbReference type="HAMAP" id="MF_01401">
    <property type="entry name" value="MsrA"/>
    <property type="match status" value="1"/>
</dbReference>
<dbReference type="InterPro" id="IPR002569">
    <property type="entry name" value="Met_Sox_Rdtase_MsrA_dom"/>
</dbReference>
<dbReference type="InterPro" id="IPR036509">
    <property type="entry name" value="Met_Sox_Rdtase_MsrA_sf"/>
</dbReference>
<dbReference type="InterPro" id="IPR050162">
    <property type="entry name" value="MsrA_MetSO_reductase"/>
</dbReference>
<dbReference type="NCBIfam" id="TIGR00401">
    <property type="entry name" value="msrA"/>
    <property type="match status" value="1"/>
</dbReference>
<dbReference type="PANTHER" id="PTHR42799">
    <property type="entry name" value="MITOCHONDRIAL PEPTIDE METHIONINE SULFOXIDE REDUCTASE"/>
    <property type="match status" value="1"/>
</dbReference>
<dbReference type="PANTHER" id="PTHR42799:SF2">
    <property type="entry name" value="MITOCHONDRIAL PEPTIDE METHIONINE SULFOXIDE REDUCTASE"/>
    <property type="match status" value="1"/>
</dbReference>
<dbReference type="Pfam" id="PF01625">
    <property type="entry name" value="PMSR"/>
    <property type="match status" value="1"/>
</dbReference>
<dbReference type="SUPFAM" id="SSF55068">
    <property type="entry name" value="Peptide methionine sulfoxide reductase"/>
    <property type="match status" value="1"/>
</dbReference>